<gene>
    <name type="primary">cfaB</name>
    <name type="ORF">DDB_G0277811</name>
</gene>
<organism>
    <name type="scientific">Dictyostelium discoideum</name>
    <name type="common">Social amoeba</name>
    <dbReference type="NCBI Taxonomy" id="44689"/>
    <lineage>
        <taxon>Eukaryota</taxon>
        <taxon>Amoebozoa</taxon>
        <taxon>Evosea</taxon>
        <taxon>Eumycetozoa</taxon>
        <taxon>Dictyostelia</taxon>
        <taxon>Dictyosteliales</taxon>
        <taxon>Dictyosteliaceae</taxon>
        <taxon>Dictyostelium</taxon>
    </lineage>
</organism>
<feature type="signal peptide" evidence="1">
    <location>
        <begin position="1"/>
        <end position="21"/>
    </location>
</feature>
<feature type="chain" id="PRO_0000388248" description="Counting factor-associated protein B">
    <location>
        <begin position="22"/>
        <end position="172"/>
    </location>
</feature>
<feature type="glycosylation site" description="N-linked (GlcNAc...) asparagine" evidence="1">
    <location>
        <position position="37"/>
    </location>
</feature>
<feature type="glycosylation site" description="N-linked (GlcNAc...) asparagine" evidence="1">
    <location>
        <position position="153"/>
    </location>
</feature>
<reference key="1">
    <citation type="journal article" date="2002" name="Nature">
        <title>Sequence and analysis of chromosome 2 of Dictyostelium discoideum.</title>
        <authorList>
            <person name="Gloeckner G."/>
            <person name="Eichinger L."/>
            <person name="Szafranski K."/>
            <person name="Pachebat J.A."/>
            <person name="Bankier A.T."/>
            <person name="Dear P.H."/>
            <person name="Lehmann R."/>
            <person name="Baumgart C."/>
            <person name="Parra G."/>
            <person name="Abril J.F."/>
            <person name="Guigo R."/>
            <person name="Kumpf K."/>
            <person name="Tunggal B."/>
            <person name="Cox E.C."/>
            <person name="Quail M.A."/>
            <person name="Platzer M."/>
            <person name="Rosenthal A."/>
            <person name="Noegel A.A."/>
        </authorList>
    </citation>
    <scope>NUCLEOTIDE SEQUENCE [LARGE SCALE GENOMIC DNA]</scope>
    <source>
        <strain>AX4</strain>
    </source>
</reference>
<reference key="2">
    <citation type="journal article" date="2005" name="Nature">
        <title>The genome of the social amoeba Dictyostelium discoideum.</title>
        <authorList>
            <person name="Eichinger L."/>
            <person name="Pachebat J.A."/>
            <person name="Gloeckner G."/>
            <person name="Rajandream M.A."/>
            <person name="Sucgang R."/>
            <person name="Berriman M."/>
            <person name="Song J."/>
            <person name="Olsen R."/>
            <person name="Szafranski K."/>
            <person name="Xu Q."/>
            <person name="Tunggal B."/>
            <person name="Kummerfeld S."/>
            <person name="Madera M."/>
            <person name="Konfortov B.A."/>
            <person name="Rivero F."/>
            <person name="Bankier A.T."/>
            <person name="Lehmann R."/>
            <person name="Hamlin N."/>
            <person name="Davies R."/>
            <person name="Gaudet P."/>
            <person name="Fey P."/>
            <person name="Pilcher K."/>
            <person name="Chen G."/>
            <person name="Saunders D."/>
            <person name="Sodergren E.J."/>
            <person name="Davis P."/>
            <person name="Kerhornou A."/>
            <person name="Nie X."/>
            <person name="Hall N."/>
            <person name="Anjard C."/>
            <person name="Hemphill L."/>
            <person name="Bason N."/>
            <person name="Farbrother P."/>
            <person name="Desany B."/>
            <person name="Just E."/>
            <person name="Morio T."/>
            <person name="Rost R."/>
            <person name="Churcher C.M."/>
            <person name="Cooper J."/>
            <person name="Haydock S."/>
            <person name="van Driessche N."/>
            <person name="Cronin A."/>
            <person name="Goodhead I."/>
            <person name="Muzny D.M."/>
            <person name="Mourier T."/>
            <person name="Pain A."/>
            <person name="Lu M."/>
            <person name="Harper D."/>
            <person name="Lindsay R."/>
            <person name="Hauser H."/>
            <person name="James K.D."/>
            <person name="Quiles M."/>
            <person name="Madan Babu M."/>
            <person name="Saito T."/>
            <person name="Buchrieser C."/>
            <person name="Wardroper A."/>
            <person name="Felder M."/>
            <person name="Thangavelu M."/>
            <person name="Johnson D."/>
            <person name="Knights A."/>
            <person name="Loulseged H."/>
            <person name="Mungall K.L."/>
            <person name="Oliver K."/>
            <person name="Price C."/>
            <person name="Quail M.A."/>
            <person name="Urushihara H."/>
            <person name="Hernandez J."/>
            <person name="Rabbinowitsch E."/>
            <person name="Steffen D."/>
            <person name="Sanders M."/>
            <person name="Ma J."/>
            <person name="Kohara Y."/>
            <person name="Sharp S."/>
            <person name="Simmonds M.N."/>
            <person name="Spiegler S."/>
            <person name="Tivey A."/>
            <person name="Sugano S."/>
            <person name="White B."/>
            <person name="Walker D."/>
            <person name="Woodward J.R."/>
            <person name="Winckler T."/>
            <person name="Tanaka Y."/>
            <person name="Shaulsky G."/>
            <person name="Schleicher M."/>
            <person name="Weinstock G.M."/>
            <person name="Rosenthal A."/>
            <person name="Cox E.C."/>
            <person name="Chisholm R.L."/>
            <person name="Gibbs R.A."/>
            <person name="Loomis W.F."/>
            <person name="Platzer M."/>
            <person name="Kay R.R."/>
            <person name="Williams J.G."/>
            <person name="Dear P.H."/>
            <person name="Noegel A.A."/>
            <person name="Barrell B.G."/>
            <person name="Kuspa A."/>
        </authorList>
    </citation>
    <scope>NUCLEOTIDE SEQUENCE [LARGE SCALE GENOMIC DNA]</scope>
    <source>
        <strain>AX4</strain>
    </source>
</reference>
<name>CFAB_DICDI</name>
<evidence type="ECO:0000255" key="1"/>
<evidence type="ECO:0000305" key="2"/>
<protein>
    <recommendedName>
        <fullName>Counting factor-associated protein B</fullName>
    </recommendedName>
</protein>
<sequence>MKLLNSLILLVLTCLVSSINTQFISIQKYDFSGNCKNSSDSASSFEASSESAAICMQNDLLSGIVTNEGVCLIFNEIPTTFLISSNGDYVVILLEIEQLKLVNVLLSVLMITTEVHIYFQLKHLSITHLIPTLKYLTMANVMDNGKLVLTIFNITLSINVMLHMKLKLIPFL</sequence>
<dbReference type="EMBL" id="AAFI02000022">
    <property type="protein sequence ID" value="EAS66902.1"/>
    <property type="molecule type" value="Genomic_DNA"/>
</dbReference>
<dbReference type="RefSeq" id="XP_001134586.1">
    <property type="nucleotide sequence ID" value="XM_001134586.1"/>
</dbReference>
<dbReference type="GlyCosmos" id="Q1ZXJ7">
    <property type="glycosylation" value="2 sites, No reported glycans"/>
</dbReference>
<dbReference type="GlyGen" id="Q1ZXJ7">
    <property type="glycosylation" value="2 sites"/>
</dbReference>
<dbReference type="PaxDb" id="44689-DDB0231572"/>
<dbReference type="EnsemblProtists" id="EAS66902">
    <property type="protein sequence ID" value="EAS66902"/>
    <property type="gene ID" value="DDB_G0277811"/>
</dbReference>
<dbReference type="GeneID" id="8621201"/>
<dbReference type="KEGG" id="ddi:DDB_G0277811"/>
<dbReference type="dictyBase" id="DDB_G0277811">
    <property type="gene designation" value="cfaB"/>
</dbReference>
<dbReference type="VEuPathDB" id="AmoebaDB:DDB_G0277811"/>
<dbReference type="HOGENOM" id="CLU_1558107_0_0_1"/>
<dbReference type="InParanoid" id="Q1ZXJ7"/>
<dbReference type="PhylomeDB" id="Q1ZXJ7"/>
<dbReference type="PRO" id="PR:Q1ZXJ7"/>
<dbReference type="Proteomes" id="UP000002195">
    <property type="component" value="Chromosome 2"/>
</dbReference>
<dbReference type="GO" id="GO:0005576">
    <property type="term" value="C:extracellular region"/>
    <property type="evidence" value="ECO:0007669"/>
    <property type="project" value="UniProtKB-SubCell"/>
</dbReference>
<dbReference type="InterPro" id="IPR021837">
    <property type="entry name" value="CfaA/B/C"/>
</dbReference>
<dbReference type="Pfam" id="PF11912">
    <property type="entry name" value="CfaA_B_C"/>
    <property type="match status" value="1"/>
</dbReference>
<accession>Q1ZXJ7</accession>
<keyword id="KW-0325">Glycoprotein</keyword>
<keyword id="KW-1185">Reference proteome</keyword>
<keyword id="KW-0964">Secreted</keyword>
<keyword id="KW-0732">Signal</keyword>
<comment type="subcellular location">
    <subcellularLocation>
        <location evidence="2">Secreted</location>
    </subcellularLocation>
</comment>
<proteinExistence type="inferred from homology"/>